<keyword id="KW-0067">ATP-binding</keyword>
<keyword id="KW-0963">Cytoplasm</keyword>
<keyword id="KW-0436">Ligase</keyword>
<keyword id="KW-0547">Nucleotide-binding</keyword>
<keyword id="KW-0566">Pantothenate biosynthesis</keyword>
<protein>
    <recommendedName>
        <fullName evidence="1">Pantothenate synthetase</fullName>
        <shortName evidence="1">PS</shortName>
        <ecNumber evidence="1">6.3.2.1</ecNumber>
    </recommendedName>
    <alternativeName>
        <fullName evidence="1">Pantoate--beta-alanine ligase</fullName>
    </alternativeName>
    <alternativeName>
        <fullName evidence="1">Pantoate-activating enzyme</fullName>
    </alternativeName>
</protein>
<gene>
    <name evidence="1" type="primary">panC</name>
    <name type="ordered locus">SUN_0318</name>
</gene>
<accession>A6Q719</accession>
<sequence>MIIARTVRELQEAKKELNGSIGFVPTMGALHQGHLSLIQQAKKENDHLIVSIFVNPTQFLEGEDLNAYPRREEADRKICEVAGVDIVFMPEIGQMYEKDELCIGAPAIRGYILEGEKRPGHFDGMLQVVMKLLNLSSATRAYFGKKDAQQLSLITQMVKNYFMDVQIIPCEIIRDEYGLALSSRNVYLNEEEKHRALALSRSLKRATKMVMQGELDVEAIKKEMMQVLSETDRVEYIAIVDRQFKALEKVQIGNTIILVAAWIGKPRLIDNIWI</sequence>
<organism>
    <name type="scientific">Sulfurovum sp. (strain NBC37-1)</name>
    <dbReference type="NCBI Taxonomy" id="387093"/>
    <lineage>
        <taxon>Bacteria</taxon>
        <taxon>Pseudomonadati</taxon>
        <taxon>Campylobacterota</taxon>
        <taxon>Epsilonproteobacteria</taxon>
        <taxon>Campylobacterales</taxon>
        <taxon>Sulfurovaceae</taxon>
        <taxon>Sulfurovum</taxon>
    </lineage>
</organism>
<comment type="function">
    <text evidence="1">Catalyzes the condensation of pantoate with beta-alanine in an ATP-dependent reaction via a pantoyl-adenylate intermediate.</text>
</comment>
<comment type="catalytic activity">
    <reaction evidence="1">
        <text>(R)-pantoate + beta-alanine + ATP = (R)-pantothenate + AMP + diphosphate + H(+)</text>
        <dbReference type="Rhea" id="RHEA:10912"/>
        <dbReference type="ChEBI" id="CHEBI:15378"/>
        <dbReference type="ChEBI" id="CHEBI:15980"/>
        <dbReference type="ChEBI" id="CHEBI:29032"/>
        <dbReference type="ChEBI" id="CHEBI:30616"/>
        <dbReference type="ChEBI" id="CHEBI:33019"/>
        <dbReference type="ChEBI" id="CHEBI:57966"/>
        <dbReference type="ChEBI" id="CHEBI:456215"/>
        <dbReference type="EC" id="6.3.2.1"/>
    </reaction>
</comment>
<comment type="pathway">
    <text evidence="1">Cofactor biosynthesis; (R)-pantothenate biosynthesis; (R)-pantothenate from (R)-pantoate and beta-alanine: step 1/1.</text>
</comment>
<comment type="subunit">
    <text evidence="1">Homodimer.</text>
</comment>
<comment type="subcellular location">
    <subcellularLocation>
        <location evidence="1">Cytoplasm</location>
    </subcellularLocation>
</comment>
<comment type="miscellaneous">
    <text evidence="1">The reaction proceeds by a bi uni uni bi ping pong mechanism.</text>
</comment>
<comment type="similarity">
    <text evidence="1">Belongs to the pantothenate synthetase family.</text>
</comment>
<evidence type="ECO:0000255" key="1">
    <source>
        <dbReference type="HAMAP-Rule" id="MF_00158"/>
    </source>
</evidence>
<dbReference type="EC" id="6.3.2.1" evidence="1"/>
<dbReference type="EMBL" id="AP009179">
    <property type="protein sequence ID" value="BAF71278.1"/>
    <property type="molecule type" value="Genomic_DNA"/>
</dbReference>
<dbReference type="RefSeq" id="WP_011980011.1">
    <property type="nucleotide sequence ID" value="NC_009663.1"/>
</dbReference>
<dbReference type="SMR" id="A6Q719"/>
<dbReference type="STRING" id="387093.SUN_0318"/>
<dbReference type="KEGG" id="sun:SUN_0318"/>
<dbReference type="eggNOG" id="COG0414">
    <property type="taxonomic scope" value="Bacteria"/>
</dbReference>
<dbReference type="HOGENOM" id="CLU_047148_0_0_7"/>
<dbReference type="OrthoDB" id="9773087at2"/>
<dbReference type="UniPathway" id="UPA00028">
    <property type="reaction ID" value="UER00005"/>
</dbReference>
<dbReference type="Proteomes" id="UP000006378">
    <property type="component" value="Chromosome"/>
</dbReference>
<dbReference type="GO" id="GO:0005829">
    <property type="term" value="C:cytosol"/>
    <property type="evidence" value="ECO:0007669"/>
    <property type="project" value="TreeGrafter"/>
</dbReference>
<dbReference type="GO" id="GO:0005524">
    <property type="term" value="F:ATP binding"/>
    <property type="evidence" value="ECO:0007669"/>
    <property type="project" value="UniProtKB-KW"/>
</dbReference>
<dbReference type="GO" id="GO:0004592">
    <property type="term" value="F:pantoate-beta-alanine ligase activity"/>
    <property type="evidence" value="ECO:0007669"/>
    <property type="project" value="UniProtKB-UniRule"/>
</dbReference>
<dbReference type="GO" id="GO:0015940">
    <property type="term" value="P:pantothenate biosynthetic process"/>
    <property type="evidence" value="ECO:0007669"/>
    <property type="project" value="UniProtKB-UniRule"/>
</dbReference>
<dbReference type="CDD" id="cd00560">
    <property type="entry name" value="PanC"/>
    <property type="match status" value="1"/>
</dbReference>
<dbReference type="Gene3D" id="3.40.50.620">
    <property type="entry name" value="HUPs"/>
    <property type="match status" value="1"/>
</dbReference>
<dbReference type="Gene3D" id="3.30.1300.10">
    <property type="entry name" value="Pantoate-beta-alanine ligase, C-terminal domain"/>
    <property type="match status" value="1"/>
</dbReference>
<dbReference type="HAMAP" id="MF_00158">
    <property type="entry name" value="PanC"/>
    <property type="match status" value="1"/>
</dbReference>
<dbReference type="InterPro" id="IPR004821">
    <property type="entry name" value="Cyt_trans-like"/>
</dbReference>
<dbReference type="InterPro" id="IPR003721">
    <property type="entry name" value="Pantoate_ligase"/>
</dbReference>
<dbReference type="InterPro" id="IPR042176">
    <property type="entry name" value="Pantoate_ligase_C"/>
</dbReference>
<dbReference type="InterPro" id="IPR014729">
    <property type="entry name" value="Rossmann-like_a/b/a_fold"/>
</dbReference>
<dbReference type="NCBIfam" id="TIGR00125">
    <property type="entry name" value="cyt_tran_rel"/>
    <property type="match status" value="1"/>
</dbReference>
<dbReference type="NCBIfam" id="TIGR00018">
    <property type="entry name" value="panC"/>
    <property type="match status" value="1"/>
</dbReference>
<dbReference type="PANTHER" id="PTHR21299">
    <property type="entry name" value="CYTIDYLATE KINASE/PANTOATE-BETA-ALANINE LIGASE"/>
    <property type="match status" value="1"/>
</dbReference>
<dbReference type="PANTHER" id="PTHR21299:SF1">
    <property type="entry name" value="PANTOATE--BETA-ALANINE LIGASE"/>
    <property type="match status" value="1"/>
</dbReference>
<dbReference type="Pfam" id="PF02569">
    <property type="entry name" value="Pantoate_ligase"/>
    <property type="match status" value="1"/>
</dbReference>
<dbReference type="SUPFAM" id="SSF52374">
    <property type="entry name" value="Nucleotidylyl transferase"/>
    <property type="match status" value="1"/>
</dbReference>
<feature type="chain" id="PRO_1000076872" description="Pantothenate synthetase">
    <location>
        <begin position="1"/>
        <end position="274"/>
    </location>
</feature>
<feature type="active site" description="Proton donor" evidence="1">
    <location>
        <position position="34"/>
    </location>
</feature>
<feature type="binding site" evidence="1">
    <location>
        <begin position="27"/>
        <end position="34"/>
    </location>
    <ligand>
        <name>ATP</name>
        <dbReference type="ChEBI" id="CHEBI:30616"/>
    </ligand>
</feature>
<feature type="binding site" evidence="1">
    <location>
        <position position="58"/>
    </location>
    <ligand>
        <name>(R)-pantoate</name>
        <dbReference type="ChEBI" id="CHEBI:15980"/>
    </ligand>
</feature>
<feature type="binding site" evidence="1">
    <location>
        <position position="58"/>
    </location>
    <ligand>
        <name>beta-alanine</name>
        <dbReference type="ChEBI" id="CHEBI:57966"/>
    </ligand>
</feature>
<feature type="binding site" evidence="1">
    <location>
        <begin position="144"/>
        <end position="147"/>
    </location>
    <ligand>
        <name>ATP</name>
        <dbReference type="ChEBI" id="CHEBI:30616"/>
    </ligand>
</feature>
<feature type="binding site" evidence="1">
    <location>
        <position position="150"/>
    </location>
    <ligand>
        <name>(R)-pantoate</name>
        <dbReference type="ChEBI" id="CHEBI:15980"/>
    </ligand>
</feature>
<feature type="binding site" evidence="1">
    <location>
        <position position="173"/>
    </location>
    <ligand>
        <name>ATP</name>
        <dbReference type="ChEBI" id="CHEBI:30616"/>
    </ligand>
</feature>
<feature type="binding site" evidence="1">
    <location>
        <begin position="181"/>
        <end position="184"/>
    </location>
    <ligand>
        <name>ATP</name>
        <dbReference type="ChEBI" id="CHEBI:30616"/>
    </ligand>
</feature>
<name>PANC_SULNB</name>
<proteinExistence type="inferred from homology"/>
<reference key="1">
    <citation type="journal article" date="2007" name="Proc. Natl. Acad. Sci. U.S.A.">
        <title>Deep-sea vent epsilon-proteobacterial genomes provide insights into emergence of pathogens.</title>
        <authorList>
            <person name="Nakagawa S."/>
            <person name="Takaki Y."/>
            <person name="Shimamura S."/>
            <person name="Reysenbach A.-L."/>
            <person name="Takai K."/>
            <person name="Horikoshi K."/>
        </authorList>
    </citation>
    <scope>NUCLEOTIDE SEQUENCE [LARGE SCALE GENOMIC DNA]</scope>
    <source>
        <strain>NBC37-1</strain>
    </source>
</reference>